<evidence type="ECO:0000250" key="1"/>
<evidence type="ECO:0000305" key="2"/>
<reference key="1">
    <citation type="journal article" date="2002" name="Nucleic Acids Res.">
        <title>Genome sequence of Shigella flexneri 2a: insights into pathogenicity through comparison with genomes of Escherichia coli K12 and O157.</title>
        <authorList>
            <person name="Jin Q."/>
            <person name="Yuan Z."/>
            <person name="Xu J."/>
            <person name="Wang Y."/>
            <person name="Shen Y."/>
            <person name="Lu W."/>
            <person name="Wang J."/>
            <person name="Liu H."/>
            <person name="Yang J."/>
            <person name="Yang F."/>
            <person name="Zhang X."/>
            <person name="Zhang J."/>
            <person name="Yang G."/>
            <person name="Wu H."/>
            <person name="Qu D."/>
            <person name="Dong J."/>
            <person name="Sun L."/>
            <person name="Xue Y."/>
            <person name="Zhao A."/>
            <person name="Gao Y."/>
            <person name="Zhu J."/>
            <person name="Kan B."/>
            <person name="Ding K."/>
            <person name="Chen S."/>
            <person name="Cheng H."/>
            <person name="Yao Z."/>
            <person name="He B."/>
            <person name="Chen R."/>
            <person name="Ma D."/>
            <person name="Qiang B."/>
            <person name="Wen Y."/>
            <person name="Hou Y."/>
            <person name="Yu J."/>
        </authorList>
    </citation>
    <scope>NUCLEOTIDE SEQUENCE [LARGE SCALE GENOMIC DNA]</scope>
    <source>
        <strain>301 / Serotype 2a</strain>
    </source>
</reference>
<reference key="2">
    <citation type="journal article" date="2003" name="Infect. Immun.">
        <title>Complete genome sequence and comparative genomics of Shigella flexneri serotype 2a strain 2457T.</title>
        <authorList>
            <person name="Wei J."/>
            <person name="Goldberg M.B."/>
            <person name="Burland V."/>
            <person name="Venkatesan M.M."/>
            <person name="Deng W."/>
            <person name="Fournier G."/>
            <person name="Mayhew G.F."/>
            <person name="Plunkett G. III"/>
            <person name="Rose D.J."/>
            <person name="Darling A."/>
            <person name="Mau B."/>
            <person name="Perna N.T."/>
            <person name="Payne S.M."/>
            <person name="Runyen-Janecky L.J."/>
            <person name="Zhou S."/>
            <person name="Schwartz D.C."/>
            <person name="Blattner F.R."/>
        </authorList>
    </citation>
    <scope>NUCLEOTIDE SEQUENCE [LARGE SCALE GENOMIC DNA]</scope>
    <source>
        <strain>ATCC 700930 / 2457T / Serotype 2a</strain>
    </source>
</reference>
<sequence length="78" mass="9006">MSRVCQVTGKRPVTGNNRSHALNATKRRFLPNLHSHRFWVESEKRFVTLRVSAKGMRVIDKKGIDTVLAELRARGEKY</sequence>
<feature type="initiator methionine" description="Removed" evidence="1">
    <location>
        <position position="1"/>
    </location>
</feature>
<feature type="chain" id="PRO_0000178546" description="Large ribosomal subunit protein bL28">
    <location>
        <begin position="2"/>
        <end position="78"/>
    </location>
</feature>
<comment type="similarity">
    <text evidence="2">Belongs to the bacterial ribosomal protein bL28 family.</text>
</comment>
<keyword id="KW-1185">Reference proteome</keyword>
<keyword id="KW-0687">Ribonucleoprotein</keyword>
<keyword id="KW-0689">Ribosomal protein</keyword>
<gene>
    <name type="primary">rpmB</name>
    <name type="ordered locus">SF3676</name>
    <name type="ordered locus">S4092</name>
</gene>
<name>RL28_SHIFL</name>
<organism>
    <name type="scientific">Shigella flexneri</name>
    <dbReference type="NCBI Taxonomy" id="623"/>
    <lineage>
        <taxon>Bacteria</taxon>
        <taxon>Pseudomonadati</taxon>
        <taxon>Pseudomonadota</taxon>
        <taxon>Gammaproteobacteria</taxon>
        <taxon>Enterobacterales</taxon>
        <taxon>Enterobacteriaceae</taxon>
        <taxon>Shigella</taxon>
    </lineage>
</organism>
<protein>
    <recommendedName>
        <fullName evidence="2">Large ribosomal subunit protein bL28</fullName>
    </recommendedName>
    <alternativeName>
        <fullName>50S ribosomal protein L28</fullName>
    </alternativeName>
</protein>
<accession>P0A7M5</accession>
<accession>P02428</accession>
<dbReference type="EMBL" id="AE005674">
    <property type="protein sequence ID" value="AAN45123.1"/>
    <property type="molecule type" value="Genomic_DNA"/>
</dbReference>
<dbReference type="EMBL" id="AE014073">
    <property type="protein sequence ID" value="AAP19069.1"/>
    <property type="molecule type" value="Genomic_DNA"/>
</dbReference>
<dbReference type="RefSeq" id="NP_709416.1">
    <property type="nucleotide sequence ID" value="NC_004337.2"/>
</dbReference>
<dbReference type="RefSeq" id="WP_000091955.1">
    <property type="nucleotide sequence ID" value="NZ_WPGW01000042.1"/>
</dbReference>
<dbReference type="SMR" id="P0A7M5"/>
<dbReference type="STRING" id="198214.SF3676"/>
<dbReference type="PaxDb" id="198214-SF3676"/>
<dbReference type="GeneID" id="1026222"/>
<dbReference type="GeneID" id="93778350"/>
<dbReference type="KEGG" id="sfl:SF3676"/>
<dbReference type="KEGG" id="sfx:S4092"/>
<dbReference type="PATRIC" id="fig|198214.7.peg.4339"/>
<dbReference type="HOGENOM" id="CLU_064548_3_1_6"/>
<dbReference type="Proteomes" id="UP000001006">
    <property type="component" value="Chromosome"/>
</dbReference>
<dbReference type="Proteomes" id="UP000002673">
    <property type="component" value="Chromosome"/>
</dbReference>
<dbReference type="GO" id="GO:0022625">
    <property type="term" value="C:cytosolic large ribosomal subunit"/>
    <property type="evidence" value="ECO:0007669"/>
    <property type="project" value="TreeGrafter"/>
</dbReference>
<dbReference type="GO" id="GO:0003735">
    <property type="term" value="F:structural constituent of ribosome"/>
    <property type="evidence" value="ECO:0007669"/>
    <property type="project" value="InterPro"/>
</dbReference>
<dbReference type="GO" id="GO:0006412">
    <property type="term" value="P:translation"/>
    <property type="evidence" value="ECO:0007669"/>
    <property type="project" value="UniProtKB-UniRule"/>
</dbReference>
<dbReference type="FunFam" id="2.30.170.40:FF:000001">
    <property type="entry name" value="50S ribosomal protein L28"/>
    <property type="match status" value="1"/>
</dbReference>
<dbReference type="Gene3D" id="2.30.170.40">
    <property type="entry name" value="Ribosomal protein L28/L24"/>
    <property type="match status" value="1"/>
</dbReference>
<dbReference type="HAMAP" id="MF_00373">
    <property type="entry name" value="Ribosomal_bL28"/>
    <property type="match status" value="1"/>
</dbReference>
<dbReference type="InterPro" id="IPR026569">
    <property type="entry name" value="Ribosomal_bL28"/>
</dbReference>
<dbReference type="InterPro" id="IPR034704">
    <property type="entry name" value="Ribosomal_bL28/bL31-like_sf"/>
</dbReference>
<dbReference type="InterPro" id="IPR001383">
    <property type="entry name" value="Ribosomal_bL28_bact-type"/>
</dbReference>
<dbReference type="InterPro" id="IPR037147">
    <property type="entry name" value="Ribosomal_bL28_sf"/>
</dbReference>
<dbReference type="NCBIfam" id="TIGR00009">
    <property type="entry name" value="L28"/>
    <property type="match status" value="1"/>
</dbReference>
<dbReference type="PANTHER" id="PTHR13528">
    <property type="entry name" value="39S RIBOSOMAL PROTEIN L28, MITOCHONDRIAL"/>
    <property type="match status" value="1"/>
</dbReference>
<dbReference type="PANTHER" id="PTHR13528:SF2">
    <property type="entry name" value="LARGE RIBOSOMAL SUBUNIT PROTEIN BL28M"/>
    <property type="match status" value="1"/>
</dbReference>
<dbReference type="Pfam" id="PF00830">
    <property type="entry name" value="Ribosomal_L28"/>
    <property type="match status" value="1"/>
</dbReference>
<dbReference type="SUPFAM" id="SSF143800">
    <property type="entry name" value="L28p-like"/>
    <property type="match status" value="1"/>
</dbReference>
<proteinExistence type="inferred from homology"/>